<gene>
    <name evidence="1" type="primary">clpX</name>
    <name type="ordered locus">Dhaf_4377</name>
</gene>
<comment type="function">
    <text evidence="1">ATP-dependent specificity component of the Clp protease. It directs the protease to specific substrates. Can perform chaperone functions in the absence of ClpP.</text>
</comment>
<comment type="subunit">
    <text evidence="1">Component of the ClpX-ClpP complex. Forms a hexameric ring that, in the presence of ATP, binds to fourteen ClpP subunits assembled into a disk-like structure with a central cavity, resembling the structure of eukaryotic proteasomes.</text>
</comment>
<comment type="similarity">
    <text evidence="1">Belongs to the ClpX chaperone family.</text>
</comment>
<organism>
    <name type="scientific">Desulfitobacterium hafniense (strain DSM 10664 / DCB-2)</name>
    <dbReference type="NCBI Taxonomy" id="272564"/>
    <lineage>
        <taxon>Bacteria</taxon>
        <taxon>Bacillati</taxon>
        <taxon>Bacillota</taxon>
        <taxon>Clostridia</taxon>
        <taxon>Eubacteriales</taxon>
        <taxon>Desulfitobacteriaceae</taxon>
        <taxon>Desulfitobacterium</taxon>
    </lineage>
</organism>
<name>CLPX_DESHD</name>
<dbReference type="EMBL" id="CP001336">
    <property type="protein sequence ID" value="ACL22382.1"/>
    <property type="molecule type" value="Genomic_DNA"/>
</dbReference>
<dbReference type="RefSeq" id="WP_005816893.1">
    <property type="nucleotide sequence ID" value="NC_011830.1"/>
</dbReference>
<dbReference type="SMR" id="B8FVI0"/>
<dbReference type="KEGG" id="dhd:Dhaf_4377"/>
<dbReference type="HOGENOM" id="CLU_014218_8_2_9"/>
<dbReference type="Proteomes" id="UP000007726">
    <property type="component" value="Chromosome"/>
</dbReference>
<dbReference type="GO" id="GO:0009376">
    <property type="term" value="C:HslUV protease complex"/>
    <property type="evidence" value="ECO:0007669"/>
    <property type="project" value="TreeGrafter"/>
</dbReference>
<dbReference type="GO" id="GO:0005524">
    <property type="term" value="F:ATP binding"/>
    <property type="evidence" value="ECO:0007669"/>
    <property type="project" value="UniProtKB-UniRule"/>
</dbReference>
<dbReference type="GO" id="GO:0016887">
    <property type="term" value="F:ATP hydrolysis activity"/>
    <property type="evidence" value="ECO:0007669"/>
    <property type="project" value="InterPro"/>
</dbReference>
<dbReference type="GO" id="GO:0140662">
    <property type="term" value="F:ATP-dependent protein folding chaperone"/>
    <property type="evidence" value="ECO:0007669"/>
    <property type="project" value="InterPro"/>
</dbReference>
<dbReference type="GO" id="GO:0046983">
    <property type="term" value="F:protein dimerization activity"/>
    <property type="evidence" value="ECO:0007669"/>
    <property type="project" value="InterPro"/>
</dbReference>
<dbReference type="GO" id="GO:0051082">
    <property type="term" value="F:unfolded protein binding"/>
    <property type="evidence" value="ECO:0007669"/>
    <property type="project" value="UniProtKB-UniRule"/>
</dbReference>
<dbReference type="GO" id="GO:0008270">
    <property type="term" value="F:zinc ion binding"/>
    <property type="evidence" value="ECO:0007669"/>
    <property type="project" value="InterPro"/>
</dbReference>
<dbReference type="GO" id="GO:0051301">
    <property type="term" value="P:cell division"/>
    <property type="evidence" value="ECO:0007669"/>
    <property type="project" value="TreeGrafter"/>
</dbReference>
<dbReference type="GO" id="GO:0051603">
    <property type="term" value="P:proteolysis involved in protein catabolic process"/>
    <property type="evidence" value="ECO:0007669"/>
    <property type="project" value="TreeGrafter"/>
</dbReference>
<dbReference type="CDD" id="cd19497">
    <property type="entry name" value="RecA-like_ClpX"/>
    <property type="match status" value="1"/>
</dbReference>
<dbReference type="FunFam" id="1.10.8.60:FF:000002">
    <property type="entry name" value="ATP-dependent Clp protease ATP-binding subunit ClpX"/>
    <property type="match status" value="1"/>
</dbReference>
<dbReference type="FunFam" id="3.40.50.300:FF:000005">
    <property type="entry name" value="ATP-dependent Clp protease ATP-binding subunit ClpX"/>
    <property type="match status" value="1"/>
</dbReference>
<dbReference type="Gene3D" id="1.10.8.60">
    <property type="match status" value="1"/>
</dbReference>
<dbReference type="Gene3D" id="6.20.220.10">
    <property type="entry name" value="ClpX chaperone, C4-type zinc finger domain"/>
    <property type="match status" value="1"/>
</dbReference>
<dbReference type="Gene3D" id="3.40.50.300">
    <property type="entry name" value="P-loop containing nucleotide triphosphate hydrolases"/>
    <property type="match status" value="1"/>
</dbReference>
<dbReference type="HAMAP" id="MF_00175">
    <property type="entry name" value="ClpX"/>
    <property type="match status" value="1"/>
</dbReference>
<dbReference type="InterPro" id="IPR003593">
    <property type="entry name" value="AAA+_ATPase"/>
</dbReference>
<dbReference type="InterPro" id="IPR050052">
    <property type="entry name" value="ATP-dep_Clp_protease_ClpX"/>
</dbReference>
<dbReference type="InterPro" id="IPR003959">
    <property type="entry name" value="ATPase_AAA_core"/>
</dbReference>
<dbReference type="InterPro" id="IPR019489">
    <property type="entry name" value="Clp_ATPase_C"/>
</dbReference>
<dbReference type="InterPro" id="IPR004487">
    <property type="entry name" value="Clp_protease_ATP-bd_su_ClpX"/>
</dbReference>
<dbReference type="InterPro" id="IPR046425">
    <property type="entry name" value="ClpX_bact"/>
</dbReference>
<dbReference type="InterPro" id="IPR027417">
    <property type="entry name" value="P-loop_NTPase"/>
</dbReference>
<dbReference type="InterPro" id="IPR010603">
    <property type="entry name" value="Znf_CppX_C4"/>
</dbReference>
<dbReference type="InterPro" id="IPR038366">
    <property type="entry name" value="Znf_CppX_C4_sf"/>
</dbReference>
<dbReference type="NCBIfam" id="TIGR00382">
    <property type="entry name" value="clpX"/>
    <property type="match status" value="1"/>
</dbReference>
<dbReference type="NCBIfam" id="NF003745">
    <property type="entry name" value="PRK05342.1"/>
    <property type="match status" value="1"/>
</dbReference>
<dbReference type="PANTHER" id="PTHR48102:SF7">
    <property type="entry name" value="ATP-DEPENDENT CLP PROTEASE ATP-BINDING SUBUNIT CLPX-LIKE, MITOCHONDRIAL"/>
    <property type="match status" value="1"/>
</dbReference>
<dbReference type="PANTHER" id="PTHR48102">
    <property type="entry name" value="ATP-DEPENDENT CLP PROTEASE ATP-BINDING SUBUNIT CLPX-LIKE, MITOCHONDRIAL-RELATED"/>
    <property type="match status" value="1"/>
</dbReference>
<dbReference type="Pfam" id="PF07724">
    <property type="entry name" value="AAA_2"/>
    <property type="match status" value="1"/>
</dbReference>
<dbReference type="Pfam" id="PF10431">
    <property type="entry name" value="ClpB_D2-small"/>
    <property type="match status" value="1"/>
</dbReference>
<dbReference type="Pfam" id="PF06689">
    <property type="entry name" value="zf-C4_ClpX"/>
    <property type="match status" value="1"/>
</dbReference>
<dbReference type="SMART" id="SM00382">
    <property type="entry name" value="AAA"/>
    <property type="match status" value="1"/>
</dbReference>
<dbReference type="SMART" id="SM01086">
    <property type="entry name" value="ClpB_D2-small"/>
    <property type="match status" value="1"/>
</dbReference>
<dbReference type="SMART" id="SM00994">
    <property type="entry name" value="zf-C4_ClpX"/>
    <property type="match status" value="1"/>
</dbReference>
<dbReference type="SUPFAM" id="SSF57716">
    <property type="entry name" value="Glucocorticoid receptor-like (DNA-binding domain)"/>
    <property type="match status" value="1"/>
</dbReference>
<dbReference type="SUPFAM" id="SSF52540">
    <property type="entry name" value="P-loop containing nucleoside triphosphate hydrolases"/>
    <property type="match status" value="1"/>
</dbReference>
<dbReference type="PROSITE" id="PS51902">
    <property type="entry name" value="CLPX_ZB"/>
    <property type="match status" value="1"/>
</dbReference>
<protein>
    <recommendedName>
        <fullName evidence="1">ATP-dependent Clp protease ATP-binding subunit ClpX</fullName>
    </recommendedName>
</protein>
<reference key="1">
    <citation type="journal article" date="2012" name="BMC Microbiol.">
        <title>Genome sequence of Desulfitobacterium hafniense DCB-2, a Gram-positive anaerobe capable of dehalogenation and metal reduction.</title>
        <authorList>
            <person name="Kim S.H."/>
            <person name="Harzman C."/>
            <person name="Davis J.K."/>
            <person name="Hutcheson R."/>
            <person name="Broderick J.B."/>
            <person name="Marsh T.L."/>
            <person name="Tiedje J.M."/>
        </authorList>
    </citation>
    <scope>NUCLEOTIDE SEQUENCE [LARGE SCALE GENOMIC DNA]</scope>
    <source>
        <strain>DSM 10664 / DCB-2</strain>
    </source>
</reference>
<sequence>MAKYNDEKNQLKCSFCGKTQDQVKKLVAGPGVYICDECIELCNEIIEEELNEDLGMEIGDIPKPKEIRAILDQYVIGQDEAKKALAVAVYNHYKRINLGMKIDDVELQKSNIVMLGPTGSGKTLLASTLAKVLNVPFAIADATSLTEAGYVGEDVENILLKLIQAADYDVEKAEKGIVYIDEIDKIARKSENPSITRDVSGEGVQQALLKILEGTVASVPPQGGRKHPHQEFIQLDTTNILFIVGGAFDGIDKIIQNRIGKKVMGFGAEIKKKSEQNIGETLRELLPADLLKFGLIPEFVGRLPVMVKLDALDEEALVRILTEPKNALVKQYEKLLELDGVALEFKEEALKAIAEEAIRRNTGARGLRAIVEEIMQNVMYDLPSRNDVTKCVVTKDVILKKEEPLLVTIDKSKKNKKEESA</sequence>
<evidence type="ECO:0000255" key="1">
    <source>
        <dbReference type="HAMAP-Rule" id="MF_00175"/>
    </source>
</evidence>
<evidence type="ECO:0000255" key="2">
    <source>
        <dbReference type="PROSITE-ProRule" id="PRU01250"/>
    </source>
</evidence>
<proteinExistence type="inferred from homology"/>
<keyword id="KW-0067">ATP-binding</keyword>
<keyword id="KW-0143">Chaperone</keyword>
<keyword id="KW-0479">Metal-binding</keyword>
<keyword id="KW-0547">Nucleotide-binding</keyword>
<keyword id="KW-0862">Zinc</keyword>
<feature type="chain" id="PRO_1000123831" description="ATP-dependent Clp protease ATP-binding subunit ClpX">
    <location>
        <begin position="1"/>
        <end position="421"/>
    </location>
</feature>
<feature type="domain" description="ClpX-type ZB" evidence="2">
    <location>
        <begin position="1"/>
        <end position="54"/>
    </location>
</feature>
<feature type="binding site" evidence="2">
    <location>
        <position position="13"/>
    </location>
    <ligand>
        <name>Zn(2+)</name>
        <dbReference type="ChEBI" id="CHEBI:29105"/>
    </ligand>
</feature>
<feature type="binding site" evidence="2">
    <location>
        <position position="16"/>
    </location>
    <ligand>
        <name>Zn(2+)</name>
        <dbReference type="ChEBI" id="CHEBI:29105"/>
    </ligand>
</feature>
<feature type="binding site" evidence="2">
    <location>
        <position position="35"/>
    </location>
    <ligand>
        <name>Zn(2+)</name>
        <dbReference type="ChEBI" id="CHEBI:29105"/>
    </ligand>
</feature>
<feature type="binding site" evidence="2">
    <location>
        <position position="38"/>
    </location>
    <ligand>
        <name>Zn(2+)</name>
        <dbReference type="ChEBI" id="CHEBI:29105"/>
    </ligand>
</feature>
<feature type="binding site" evidence="1">
    <location>
        <begin position="117"/>
        <end position="124"/>
    </location>
    <ligand>
        <name>ATP</name>
        <dbReference type="ChEBI" id="CHEBI:30616"/>
    </ligand>
</feature>
<accession>B8FVI0</accession>